<name>EF1B_METPE</name>
<accession>B8GF55</accession>
<keyword id="KW-0251">Elongation factor</keyword>
<keyword id="KW-0648">Protein biosynthesis</keyword>
<keyword id="KW-1185">Reference proteome</keyword>
<sequence length="85" mass="8965">MGSVALILKVMPESPDVDLEALKAAMRAKVPSIQDIQEEPIGFGLKALKVMAVVSDQGGETDALEEALSSIEGVERAEIAELTLT</sequence>
<evidence type="ECO:0000255" key="1">
    <source>
        <dbReference type="HAMAP-Rule" id="MF_00043"/>
    </source>
</evidence>
<proteinExistence type="inferred from homology"/>
<feature type="chain" id="PRO_1000117327" description="Elongation factor 1-beta">
    <location>
        <begin position="1"/>
        <end position="85"/>
    </location>
</feature>
<reference key="1">
    <citation type="journal article" date="2015" name="Genome Announc.">
        <title>Complete Genome Sequence of Methanosphaerula palustris E1-9CT, a Hydrogenotrophic Methanogen Isolated from a Minerotrophic Fen Peatland.</title>
        <authorList>
            <person name="Cadillo-Quiroz H."/>
            <person name="Browne P."/>
            <person name="Kyrpides N."/>
            <person name="Woyke T."/>
            <person name="Goodwin L."/>
            <person name="Detter C."/>
            <person name="Yavitt J.B."/>
            <person name="Zinder S.H."/>
        </authorList>
    </citation>
    <scope>NUCLEOTIDE SEQUENCE [LARGE SCALE GENOMIC DNA]</scope>
    <source>
        <strain>ATCC BAA-1556 / DSM 19958 / E1-9c</strain>
    </source>
</reference>
<protein>
    <recommendedName>
        <fullName evidence="1">Elongation factor 1-beta</fullName>
        <shortName evidence="1">EF-1-beta</shortName>
    </recommendedName>
    <alternativeName>
        <fullName evidence="1">aEF-1beta</fullName>
    </alternativeName>
</protein>
<organism>
    <name type="scientific">Methanosphaerula palustris (strain ATCC BAA-1556 / DSM 19958 / E1-9c)</name>
    <dbReference type="NCBI Taxonomy" id="521011"/>
    <lineage>
        <taxon>Archaea</taxon>
        <taxon>Methanobacteriati</taxon>
        <taxon>Methanobacteriota</taxon>
        <taxon>Stenosarchaea group</taxon>
        <taxon>Methanomicrobia</taxon>
        <taxon>Methanomicrobiales</taxon>
        <taxon>Methanoregulaceae</taxon>
        <taxon>Methanosphaerula</taxon>
    </lineage>
</organism>
<dbReference type="EMBL" id="CP001338">
    <property type="protein sequence ID" value="ACL17861.1"/>
    <property type="molecule type" value="Genomic_DNA"/>
</dbReference>
<dbReference type="RefSeq" id="WP_012619180.1">
    <property type="nucleotide sequence ID" value="NC_011832.1"/>
</dbReference>
<dbReference type="SMR" id="B8GF55"/>
<dbReference type="STRING" id="521011.Mpal_2591"/>
<dbReference type="GeneID" id="7270721"/>
<dbReference type="KEGG" id="mpl:Mpal_2591"/>
<dbReference type="eggNOG" id="arCOG01988">
    <property type="taxonomic scope" value="Archaea"/>
</dbReference>
<dbReference type="HOGENOM" id="CLU_165896_0_0_2"/>
<dbReference type="OrthoDB" id="84643at2157"/>
<dbReference type="Proteomes" id="UP000002457">
    <property type="component" value="Chromosome"/>
</dbReference>
<dbReference type="GO" id="GO:0003746">
    <property type="term" value="F:translation elongation factor activity"/>
    <property type="evidence" value="ECO:0007669"/>
    <property type="project" value="UniProtKB-UniRule"/>
</dbReference>
<dbReference type="CDD" id="cd00292">
    <property type="entry name" value="EF1B"/>
    <property type="match status" value="1"/>
</dbReference>
<dbReference type="Gene3D" id="3.30.70.60">
    <property type="match status" value="1"/>
</dbReference>
<dbReference type="HAMAP" id="MF_00043">
    <property type="entry name" value="EF1_beta"/>
    <property type="match status" value="1"/>
</dbReference>
<dbReference type="InterPro" id="IPR036219">
    <property type="entry name" value="eEF-1beta-like_sf"/>
</dbReference>
<dbReference type="InterPro" id="IPR014038">
    <property type="entry name" value="EF1B_bsu/dsu_GNE"/>
</dbReference>
<dbReference type="InterPro" id="IPR014717">
    <property type="entry name" value="Transl_elong_EF1B/ribsomal_bS6"/>
</dbReference>
<dbReference type="InterPro" id="IPR004542">
    <property type="entry name" value="Transl_elong_EF1B_B_arc"/>
</dbReference>
<dbReference type="NCBIfam" id="TIGR00489">
    <property type="entry name" value="aEF-1_beta"/>
    <property type="match status" value="1"/>
</dbReference>
<dbReference type="NCBIfam" id="NF001670">
    <property type="entry name" value="PRK00435.1"/>
    <property type="match status" value="1"/>
</dbReference>
<dbReference type="PANTHER" id="PTHR39647">
    <property type="entry name" value="ELONGATION FACTOR 1-BETA"/>
    <property type="match status" value="1"/>
</dbReference>
<dbReference type="PANTHER" id="PTHR39647:SF1">
    <property type="entry name" value="ELONGATION FACTOR 1-BETA"/>
    <property type="match status" value="1"/>
</dbReference>
<dbReference type="Pfam" id="PF00736">
    <property type="entry name" value="EF1_GNE"/>
    <property type="match status" value="1"/>
</dbReference>
<dbReference type="PIRSF" id="PIRSF006521">
    <property type="entry name" value="Transl_elong_EF1B_B_arc"/>
    <property type="match status" value="1"/>
</dbReference>
<dbReference type="SMART" id="SM00888">
    <property type="entry name" value="EF1_GNE"/>
    <property type="match status" value="1"/>
</dbReference>
<dbReference type="SUPFAM" id="SSF54984">
    <property type="entry name" value="eEF-1beta-like"/>
    <property type="match status" value="1"/>
</dbReference>
<comment type="function">
    <text evidence="1">Promotes the exchange of GDP for GTP in EF-1-alpha/GDP, thus allowing the regeneration of EF-1-alpha/GTP that could then be used to form the ternary complex EF-1-alpha/GTP/AAtRNA.</text>
</comment>
<comment type="similarity">
    <text evidence="1">Belongs to the EF-1-beta/EF-1-delta family.</text>
</comment>
<gene>
    <name evidence="1" type="primary">ef1b</name>
    <name type="ordered locus">Mpal_2591</name>
</gene>